<sequence length="1124" mass="123015">MSWLSRLNPRGPGTRTGRHAAPSSPCTADPETCLMVFENHWRQVSGVLKQRESSVGGFADDLTAVRNHTDQMLCLLAEERPAGGDIDSPAMGPILEMVVAENILEELVQWHVCRGLDPDSQLELLKLFEMLIGQSHQPLLLHSAVLQPLLSLLGACVDPQMGCPPALESSLVLLLNQVCVSMAKETAVLELLFRCGSVQQGPTNLLIFSLLVPFIHRDGALGQQARDALLLVMATSASNHAVARHITENSYFCPVLATGLSGLYSSLPRKIEVRGDDWHALRREDWIGVSSLVLFMNSLEFCNAVVQVAHPLVRCQLLDYLHNGFLVPVMGPALHKSSVDEMIASTAYLDLFLRCITETSLLKTFLRFILLHHHDNDTILDTLLTRISSNSRLCMVSLSLFKTLLSLNCEDLMLQLVLRYLLPCTHVMLSQRRAVRETDLYGKSADKFLSLIPECCRITSAPSGERDEEPAFWGKVLGSPTSESPVHPRPSTPSRLALFIRQQSSGGQANPSSSGSENAPSSPRGSVSSPLSPDSPMHQLSDFSEGETGYLEYLRDARKGIELCSWGCRDWSAPYDGENPSPNSAPLPPPPPTSNPSLSMVQEHFSVMDPTQQRAAVVAAARAEWSSSDRDSGEWDVTISKNCISLTPRSKKRSLLPSSIPLQSSSSASVSTEITGASETVYQHSRSTPHPALYNGMGQVEFTDSVDERMEAKKVKRDSDVNSGMVETGMNGSMGPVDYNDFHVGSTLKSSQVQLKPHLQHHTSVPSSTQECLPTESHRLSPVLGLTESSAASRGSESVERLIEELLERAPSEPLSGDSKCQGISIEAFHQELRELEERVRERRVSSRSSEESSRESRTAPLPSLTDEDCLPVETEQRSSETKPDSSTTGVFSPARPLGQPLAQPYTGPFITVLFSKLENMMQNSLYVNILLTGVVFQLACYPQPLLRSFLLNANMVFQPSVKSLIQVLGTVKNRIEVFAAAHEDFPAMLRKARRFLVARGKLDWSDSAMGVPSLRRSDSLIKSRKPSLGDLILRHTNSPTRARHAAQLALAHVRDGGQSLHSALFRGSAASGASGLEKQAEALRVKNAVYCAVIFSEFLKELAALAQEHAVALPFPPSQGTEE</sequence>
<proteinExistence type="inferred from homology"/>
<gene>
    <name type="primary">fhip1b</name>
    <name type="synonym">fam160a2</name>
    <name type="ORF">si:ch211-39h10.1</name>
</gene>
<dbReference type="EMBL" id="CR936366">
    <property type="protein sequence ID" value="CAQ15357.1"/>
    <property type="molecule type" value="Genomic_DNA"/>
</dbReference>
<dbReference type="RefSeq" id="NP_001124329.1">
    <property type="nucleotide sequence ID" value="NM_001130857.1"/>
</dbReference>
<dbReference type="RefSeq" id="XP_005167711.1">
    <property type="nucleotide sequence ID" value="XM_005167654.5"/>
</dbReference>
<dbReference type="SMR" id="B0V207"/>
<dbReference type="FunCoup" id="B0V207">
    <property type="interactions" value="1737"/>
</dbReference>
<dbReference type="STRING" id="7955.ENSDARP00000101150"/>
<dbReference type="PaxDb" id="7955-ENSDARP00000101150"/>
<dbReference type="PeptideAtlas" id="B0V207"/>
<dbReference type="Ensembl" id="ENSDART00000110582">
    <property type="protein sequence ID" value="ENSDARP00000101150"/>
    <property type="gene ID" value="ENSDARG00000078188"/>
</dbReference>
<dbReference type="GeneID" id="100001896"/>
<dbReference type="KEGG" id="dre:100001896"/>
<dbReference type="AGR" id="ZFIN:ZDB-GENE-070912-291"/>
<dbReference type="CTD" id="84067"/>
<dbReference type="ZFIN" id="ZDB-GENE-070912-291">
    <property type="gene designation" value="fhip1b"/>
</dbReference>
<dbReference type="eggNOG" id="KOG3695">
    <property type="taxonomic scope" value="Eukaryota"/>
</dbReference>
<dbReference type="HOGENOM" id="CLU_007807_0_0_1"/>
<dbReference type="InParanoid" id="B0V207"/>
<dbReference type="OMA" id="QQTHTEC"/>
<dbReference type="OrthoDB" id="6287422at2759"/>
<dbReference type="PhylomeDB" id="B0V207"/>
<dbReference type="TreeFam" id="TF313941"/>
<dbReference type="PRO" id="PR:B0V207"/>
<dbReference type="Proteomes" id="UP000000437">
    <property type="component" value="Chromosome 9"/>
</dbReference>
<dbReference type="Bgee" id="ENSDARG00000078188">
    <property type="expression patterns" value="Expressed in retina and 20 other cell types or tissues"/>
</dbReference>
<dbReference type="GO" id="GO:0070695">
    <property type="term" value="C:FHF complex"/>
    <property type="evidence" value="ECO:0000250"/>
    <property type="project" value="UniProtKB"/>
</dbReference>
<dbReference type="GO" id="GO:0045022">
    <property type="term" value="P:early endosome to late endosome transport"/>
    <property type="evidence" value="ECO:0000250"/>
    <property type="project" value="UniProtKB"/>
</dbReference>
<dbReference type="GO" id="GO:0007032">
    <property type="term" value="P:endosome organization"/>
    <property type="evidence" value="ECO:0000250"/>
    <property type="project" value="UniProtKB"/>
</dbReference>
<dbReference type="GO" id="GO:0008333">
    <property type="term" value="P:endosome to lysosome transport"/>
    <property type="evidence" value="ECO:0000250"/>
    <property type="project" value="UniProtKB"/>
</dbReference>
<dbReference type="GO" id="GO:0007040">
    <property type="term" value="P:lysosome organization"/>
    <property type="evidence" value="ECO:0000250"/>
    <property type="project" value="UniProtKB"/>
</dbReference>
<dbReference type="GO" id="GO:1905719">
    <property type="term" value="P:protein localization to perinuclear region of cytoplasm"/>
    <property type="evidence" value="ECO:0000250"/>
    <property type="project" value="UniProtKB"/>
</dbReference>
<dbReference type="GO" id="GO:0015031">
    <property type="term" value="P:protein transport"/>
    <property type="evidence" value="ECO:0007669"/>
    <property type="project" value="UniProtKB-KW"/>
</dbReference>
<dbReference type="InterPro" id="IPR019384">
    <property type="entry name" value="FHIP"/>
</dbReference>
<dbReference type="InterPro" id="IPR045669">
    <property type="entry name" value="FHIP_C"/>
</dbReference>
<dbReference type="InterPro" id="IPR045668">
    <property type="entry name" value="FHIP_KELAA_motif"/>
</dbReference>
<dbReference type="PANTHER" id="PTHR21705:SF4">
    <property type="entry name" value="FHF COMPLEX SUBUNIT HOOK-INTERACTING PROTEIN 1B"/>
    <property type="match status" value="1"/>
</dbReference>
<dbReference type="PANTHER" id="PTHR21705">
    <property type="entry name" value="RAI16 PROTEIN-RELATED"/>
    <property type="match status" value="1"/>
</dbReference>
<dbReference type="Pfam" id="PF19314">
    <property type="entry name" value="DUF5917"/>
    <property type="match status" value="1"/>
</dbReference>
<dbReference type="Pfam" id="PF19311">
    <property type="entry name" value="KELAA"/>
    <property type="match status" value="1"/>
</dbReference>
<dbReference type="Pfam" id="PF10257">
    <property type="entry name" value="RAI16-like"/>
    <property type="match status" value="1"/>
</dbReference>
<feature type="chain" id="PRO_0000379001" description="FHF complex subunit HOOK-interacting protein 1B">
    <location>
        <begin position="1"/>
        <end position="1124"/>
    </location>
</feature>
<feature type="region of interest" description="Disordered" evidence="2">
    <location>
        <begin position="1"/>
        <end position="25"/>
    </location>
</feature>
<feature type="region of interest" description="Disordered" evidence="2">
    <location>
        <begin position="461"/>
        <end position="542"/>
    </location>
</feature>
<feature type="region of interest" description="Disordered" evidence="2">
    <location>
        <begin position="577"/>
        <end position="599"/>
    </location>
</feature>
<feature type="region of interest" description="Disordered" evidence="2">
    <location>
        <begin position="713"/>
        <end position="732"/>
    </location>
</feature>
<feature type="region of interest" description="Disordered" evidence="2">
    <location>
        <begin position="838"/>
        <end position="900"/>
    </location>
</feature>
<feature type="compositionally biased region" description="Low complexity" evidence="2">
    <location>
        <begin position="509"/>
        <end position="532"/>
    </location>
</feature>
<feature type="compositionally biased region" description="Pro residues" evidence="2">
    <location>
        <begin position="583"/>
        <end position="594"/>
    </location>
</feature>
<feature type="compositionally biased region" description="Basic and acidic residues" evidence="2">
    <location>
        <begin position="838"/>
        <end position="858"/>
    </location>
</feature>
<feature type="compositionally biased region" description="Basic and acidic residues" evidence="2">
    <location>
        <begin position="875"/>
        <end position="884"/>
    </location>
</feature>
<comment type="function">
    <text evidence="1">Component of the FTS/Hook/FHIP complex (FHF complex). The FHF complex may function to promote vesicle trafficking and/or fusion via the homotypic vesicular protein sorting complex (the HOPS complex). FHF complex promotes the distribution of AP-4 complex to the perinuclear area of the cell.</text>
</comment>
<comment type="subunit">
    <text evidence="1">Component of the FTS/Hook/FHIP complex (FHF complex), composed of AKTIP/FTS, FHIP1B, and one or more members of the Hook family of proteins HOOK1, HOOK2, and HOOK3. The FHF complex associates with the homotypic vesicular sorting complex (the HOPS complex).</text>
</comment>
<comment type="similarity">
    <text evidence="3">Belongs to the FHIP family.</text>
</comment>
<name>FHI1B_DANRE</name>
<reference key="1">
    <citation type="journal article" date="2013" name="Nature">
        <title>The zebrafish reference genome sequence and its relationship to the human genome.</title>
        <authorList>
            <person name="Howe K."/>
            <person name="Clark M.D."/>
            <person name="Torroja C.F."/>
            <person name="Torrance J."/>
            <person name="Berthelot C."/>
            <person name="Muffato M."/>
            <person name="Collins J.E."/>
            <person name="Humphray S."/>
            <person name="McLaren K."/>
            <person name="Matthews L."/>
            <person name="McLaren S."/>
            <person name="Sealy I."/>
            <person name="Caccamo M."/>
            <person name="Churcher C."/>
            <person name="Scott C."/>
            <person name="Barrett J.C."/>
            <person name="Koch R."/>
            <person name="Rauch G.J."/>
            <person name="White S."/>
            <person name="Chow W."/>
            <person name="Kilian B."/>
            <person name="Quintais L.T."/>
            <person name="Guerra-Assuncao J.A."/>
            <person name="Zhou Y."/>
            <person name="Gu Y."/>
            <person name="Yen J."/>
            <person name="Vogel J.H."/>
            <person name="Eyre T."/>
            <person name="Redmond S."/>
            <person name="Banerjee R."/>
            <person name="Chi J."/>
            <person name="Fu B."/>
            <person name="Langley E."/>
            <person name="Maguire S.F."/>
            <person name="Laird G.K."/>
            <person name="Lloyd D."/>
            <person name="Kenyon E."/>
            <person name="Donaldson S."/>
            <person name="Sehra H."/>
            <person name="Almeida-King J."/>
            <person name="Loveland J."/>
            <person name="Trevanion S."/>
            <person name="Jones M."/>
            <person name="Quail M."/>
            <person name="Willey D."/>
            <person name="Hunt A."/>
            <person name="Burton J."/>
            <person name="Sims S."/>
            <person name="McLay K."/>
            <person name="Plumb B."/>
            <person name="Davis J."/>
            <person name="Clee C."/>
            <person name="Oliver K."/>
            <person name="Clark R."/>
            <person name="Riddle C."/>
            <person name="Elliot D."/>
            <person name="Threadgold G."/>
            <person name="Harden G."/>
            <person name="Ware D."/>
            <person name="Begum S."/>
            <person name="Mortimore B."/>
            <person name="Kerry G."/>
            <person name="Heath P."/>
            <person name="Phillimore B."/>
            <person name="Tracey A."/>
            <person name="Corby N."/>
            <person name="Dunn M."/>
            <person name="Johnson C."/>
            <person name="Wood J."/>
            <person name="Clark S."/>
            <person name="Pelan S."/>
            <person name="Griffiths G."/>
            <person name="Smith M."/>
            <person name="Glithero R."/>
            <person name="Howden P."/>
            <person name="Barker N."/>
            <person name="Lloyd C."/>
            <person name="Stevens C."/>
            <person name="Harley J."/>
            <person name="Holt K."/>
            <person name="Panagiotidis G."/>
            <person name="Lovell J."/>
            <person name="Beasley H."/>
            <person name="Henderson C."/>
            <person name="Gordon D."/>
            <person name="Auger K."/>
            <person name="Wright D."/>
            <person name="Collins J."/>
            <person name="Raisen C."/>
            <person name="Dyer L."/>
            <person name="Leung K."/>
            <person name="Robertson L."/>
            <person name="Ambridge K."/>
            <person name="Leongamornlert D."/>
            <person name="McGuire S."/>
            <person name="Gilderthorp R."/>
            <person name="Griffiths C."/>
            <person name="Manthravadi D."/>
            <person name="Nichol S."/>
            <person name="Barker G."/>
            <person name="Whitehead S."/>
            <person name="Kay M."/>
            <person name="Brown J."/>
            <person name="Murnane C."/>
            <person name="Gray E."/>
            <person name="Humphries M."/>
            <person name="Sycamore N."/>
            <person name="Barker D."/>
            <person name="Saunders D."/>
            <person name="Wallis J."/>
            <person name="Babbage A."/>
            <person name="Hammond S."/>
            <person name="Mashreghi-Mohammadi M."/>
            <person name="Barr L."/>
            <person name="Martin S."/>
            <person name="Wray P."/>
            <person name="Ellington A."/>
            <person name="Matthews N."/>
            <person name="Ellwood M."/>
            <person name="Woodmansey R."/>
            <person name="Clark G."/>
            <person name="Cooper J."/>
            <person name="Tromans A."/>
            <person name="Grafham D."/>
            <person name="Skuce C."/>
            <person name="Pandian R."/>
            <person name="Andrews R."/>
            <person name="Harrison E."/>
            <person name="Kimberley A."/>
            <person name="Garnett J."/>
            <person name="Fosker N."/>
            <person name="Hall R."/>
            <person name="Garner P."/>
            <person name="Kelly D."/>
            <person name="Bird C."/>
            <person name="Palmer S."/>
            <person name="Gehring I."/>
            <person name="Berger A."/>
            <person name="Dooley C.M."/>
            <person name="Ersan-Urun Z."/>
            <person name="Eser C."/>
            <person name="Geiger H."/>
            <person name="Geisler M."/>
            <person name="Karotki L."/>
            <person name="Kirn A."/>
            <person name="Konantz J."/>
            <person name="Konantz M."/>
            <person name="Oberlander M."/>
            <person name="Rudolph-Geiger S."/>
            <person name="Teucke M."/>
            <person name="Lanz C."/>
            <person name="Raddatz G."/>
            <person name="Osoegawa K."/>
            <person name="Zhu B."/>
            <person name="Rapp A."/>
            <person name="Widaa S."/>
            <person name="Langford C."/>
            <person name="Yang F."/>
            <person name="Schuster S.C."/>
            <person name="Carter N.P."/>
            <person name="Harrow J."/>
            <person name="Ning Z."/>
            <person name="Herrero J."/>
            <person name="Searle S.M."/>
            <person name="Enright A."/>
            <person name="Geisler R."/>
            <person name="Plasterk R.H."/>
            <person name="Lee C."/>
            <person name="Westerfield M."/>
            <person name="de Jong P.J."/>
            <person name="Zon L.I."/>
            <person name="Postlethwait J.H."/>
            <person name="Nusslein-Volhard C."/>
            <person name="Hubbard T.J."/>
            <person name="Roest Crollius H."/>
            <person name="Rogers J."/>
            <person name="Stemple D.L."/>
        </authorList>
    </citation>
    <scope>NUCLEOTIDE SEQUENCE [LARGE SCALE GENOMIC DNA]</scope>
    <source>
        <strain>Tuebingen</strain>
    </source>
</reference>
<accession>B0V207</accession>
<evidence type="ECO:0000250" key="1">
    <source>
        <dbReference type="UniProtKB" id="Q8N612"/>
    </source>
</evidence>
<evidence type="ECO:0000256" key="2">
    <source>
        <dbReference type="SAM" id="MobiDB-lite"/>
    </source>
</evidence>
<evidence type="ECO:0000305" key="3"/>
<keyword id="KW-0653">Protein transport</keyword>
<keyword id="KW-1185">Reference proteome</keyword>
<keyword id="KW-0813">Transport</keyword>
<protein>
    <recommendedName>
        <fullName>FHF complex subunit HOOK-interacting protein 1B</fullName>
        <shortName>FHIP1B</shortName>
    </recommendedName>
    <alternativeName>
        <fullName>FTS- and Hook-interacting protein homolog</fullName>
        <shortName>FHIP</shortName>
    </alternativeName>
</protein>
<organism>
    <name type="scientific">Danio rerio</name>
    <name type="common">Zebrafish</name>
    <name type="synonym">Brachydanio rerio</name>
    <dbReference type="NCBI Taxonomy" id="7955"/>
    <lineage>
        <taxon>Eukaryota</taxon>
        <taxon>Metazoa</taxon>
        <taxon>Chordata</taxon>
        <taxon>Craniata</taxon>
        <taxon>Vertebrata</taxon>
        <taxon>Euteleostomi</taxon>
        <taxon>Actinopterygii</taxon>
        <taxon>Neopterygii</taxon>
        <taxon>Teleostei</taxon>
        <taxon>Ostariophysi</taxon>
        <taxon>Cypriniformes</taxon>
        <taxon>Danionidae</taxon>
        <taxon>Danioninae</taxon>
        <taxon>Danio</taxon>
    </lineage>
</organism>